<proteinExistence type="inferred from homology"/>
<evidence type="ECO:0000255" key="1">
    <source>
        <dbReference type="HAMAP-Rule" id="MF_00658"/>
    </source>
</evidence>
<name>RLMH_HALH5</name>
<dbReference type="EC" id="2.1.1.177" evidence="1"/>
<dbReference type="EMBL" id="BA000004">
    <property type="protein sequence ID" value="BAB07726.1"/>
    <property type="molecule type" value="Genomic_DNA"/>
</dbReference>
<dbReference type="PIR" id="G84150">
    <property type="entry name" value="G84150"/>
</dbReference>
<dbReference type="RefSeq" id="WP_010900131.1">
    <property type="nucleotide sequence ID" value="NC_002570.2"/>
</dbReference>
<dbReference type="SMR" id="Q9K5T1"/>
<dbReference type="STRING" id="272558.gene:10729920"/>
<dbReference type="KEGG" id="bha:BH4007"/>
<dbReference type="eggNOG" id="COG1576">
    <property type="taxonomic scope" value="Bacteria"/>
</dbReference>
<dbReference type="HOGENOM" id="CLU_100552_0_0_9"/>
<dbReference type="OrthoDB" id="9806643at2"/>
<dbReference type="Proteomes" id="UP000001258">
    <property type="component" value="Chromosome"/>
</dbReference>
<dbReference type="GO" id="GO:0005737">
    <property type="term" value="C:cytoplasm"/>
    <property type="evidence" value="ECO:0007669"/>
    <property type="project" value="UniProtKB-SubCell"/>
</dbReference>
<dbReference type="GO" id="GO:0070038">
    <property type="term" value="F:rRNA (pseudouridine-N3-)-methyltransferase activity"/>
    <property type="evidence" value="ECO:0007669"/>
    <property type="project" value="UniProtKB-UniRule"/>
</dbReference>
<dbReference type="CDD" id="cd18081">
    <property type="entry name" value="RlmH-like"/>
    <property type="match status" value="1"/>
</dbReference>
<dbReference type="Gene3D" id="3.40.1280.10">
    <property type="match status" value="1"/>
</dbReference>
<dbReference type="HAMAP" id="MF_00658">
    <property type="entry name" value="23SrRNA_methyltr_H"/>
    <property type="match status" value="1"/>
</dbReference>
<dbReference type="InterPro" id="IPR029028">
    <property type="entry name" value="Alpha/beta_knot_MTases"/>
</dbReference>
<dbReference type="InterPro" id="IPR003742">
    <property type="entry name" value="RlmH-like"/>
</dbReference>
<dbReference type="InterPro" id="IPR029026">
    <property type="entry name" value="tRNA_m1G_MTases_N"/>
</dbReference>
<dbReference type="NCBIfam" id="NF000985">
    <property type="entry name" value="PRK00103.1-3"/>
    <property type="match status" value="1"/>
</dbReference>
<dbReference type="NCBIfam" id="TIGR00246">
    <property type="entry name" value="tRNA_RlmH_YbeA"/>
    <property type="match status" value="1"/>
</dbReference>
<dbReference type="PANTHER" id="PTHR33603">
    <property type="entry name" value="METHYLTRANSFERASE"/>
    <property type="match status" value="1"/>
</dbReference>
<dbReference type="PANTHER" id="PTHR33603:SF1">
    <property type="entry name" value="RIBOSOMAL RNA LARGE SUBUNIT METHYLTRANSFERASE H"/>
    <property type="match status" value="1"/>
</dbReference>
<dbReference type="Pfam" id="PF02590">
    <property type="entry name" value="SPOUT_MTase"/>
    <property type="match status" value="1"/>
</dbReference>
<dbReference type="PIRSF" id="PIRSF004505">
    <property type="entry name" value="MT_bac"/>
    <property type="match status" value="1"/>
</dbReference>
<dbReference type="SUPFAM" id="SSF75217">
    <property type="entry name" value="alpha/beta knot"/>
    <property type="match status" value="1"/>
</dbReference>
<gene>
    <name evidence="1" type="primary">rlmH</name>
    <name type="ordered locus">BH4007</name>
</gene>
<reference key="1">
    <citation type="journal article" date="2000" name="Nucleic Acids Res.">
        <title>Complete genome sequence of the alkaliphilic bacterium Bacillus halodurans and genomic sequence comparison with Bacillus subtilis.</title>
        <authorList>
            <person name="Takami H."/>
            <person name="Nakasone K."/>
            <person name="Takaki Y."/>
            <person name="Maeno G."/>
            <person name="Sasaki R."/>
            <person name="Masui N."/>
            <person name="Fuji F."/>
            <person name="Hirama C."/>
            <person name="Nakamura Y."/>
            <person name="Ogasawara N."/>
            <person name="Kuhara S."/>
            <person name="Horikoshi K."/>
        </authorList>
    </citation>
    <scope>NUCLEOTIDE SEQUENCE [LARGE SCALE GENOMIC DNA]</scope>
    <source>
        <strain>ATCC BAA-125 / DSM 18197 / FERM 7344 / JCM 9153 / C-125</strain>
    </source>
</reference>
<organism>
    <name type="scientific">Halalkalibacterium halodurans (strain ATCC BAA-125 / DSM 18197 / FERM 7344 / JCM 9153 / C-125)</name>
    <name type="common">Bacillus halodurans</name>
    <dbReference type="NCBI Taxonomy" id="272558"/>
    <lineage>
        <taxon>Bacteria</taxon>
        <taxon>Bacillati</taxon>
        <taxon>Bacillota</taxon>
        <taxon>Bacilli</taxon>
        <taxon>Bacillales</taxon>
        <taxon>Bacillaceae</taxon>
        <taxon>Halalkalibacterium (ex Joshi et al. 2022)</taxon>
    </lineage>
</organism>
<sequence length="159" mass="18014">MNISIISVGKLKEKYLKQGIAEYTKRLGAYAKIELIEVPDEKAPEQLSDTEMEHVKQKEGERILAKLHPDTYVIALAIEGSMKSSEELADTMDRLATYGKSKVAFVIGGSLGLSDAVLKRADEKLSFSKMTFPHRLMRLILLEQVYRAFRINRGEPYHK</sequence>
<keyword id="KW-0963">Cytoplasm</keyword>
<keyword id="KW-0489">Methyltransferase</keyword>
<keyword id="KW-1185">Reference proteome</keyword>
<keyword id="KW-0698">rRNA processing</keyword>
<keyword id="KW-0949">S-adenosyl-L-methionine</keyword>
<keyword id="KW-0808">Transferase</keyword>
<comment type="function">
    <text evidence="1">Specifically methylates the pseudouridine at position 1915 (m3Psi1915) in 23S rRNA.</text>
</comment>
<comment type="catalytic activity">
    <reaction evidence="1">
        <text>pseudouridine(1915) in 23S rRNA + S-adenosyl-L-methionine = N(3)-methylpseudouridine(1915) in 23S rRNA + S-adenosyl-L-homocysteine + H(+)</text>
        <dbReference type="Rhea" id="RHEA:42752"/>
        <dbReference type="Rhea" id="RHEA-COMP:10221"/>
        <dbReference type="Rhea" id="RHEA-COMP:10222"/>
        <dbReference type="ChEBI" id="CHEBI:15378"/>
        <dbReference type="ChEBI" id="CHEBI:57856"/>
        <dbReference type="ChEBI" id="CHEBI:59789"/>
        <dbReference type="ChEBI" id="CHEBI:65314"/>
        <dbReference type="ChEBI" id="CHEBI:74486"/>
        <dbReference type="EC" id="2.1.1.177"/>
    </reaction>
</comment>
<comment type="subunit">
    <text evidence="1">Homodimer.</text>
</comment>
<comment type="subcellular location">
    <subcellularLocation>
        <location evidence="1">Cytoplasm</location>
    </subcellularLocation>
</comment>
<comment type="similarity">
    <text evidence="1">Belongs to the RNA methyltransferase RlmH family.</text>
</comment>
<feature type="chain" id="PRO_0000198086" description="Ribosomal RNA large subunit methyltransferase H">
    <location>
        <begin position="1"/>
        <end position="159"/>
    </location>
</feature>
<feature type="binding site" evidence="1">
    <location>
        <position position="76"/>
    </location>
    <ligand>
        <name>S-adenosyl-L-methionine</name>
        <dbReference type="ChEBI" id="CHEBI:59789"/>
    </ligand>
</feature>
<feature type="binding site" evidence="1">
    <location>
        <position position="108"/>
    </location>
    <ligand>
        <name>S-adenosyl-L-methionine</name>
        <dbReference type="ChEBI" id="CHEBI:59789"/>
    </ligand>
</feature>
<feature type="binding site" evidence="1">
    <location>
        <begin position="127"/>
        <end position="132"/>
    </location>
    <ligand>
        <name>S-adenosyl-L-methionine</name>
        <dbReference type="ChEBI" id="CHEBI:59789"/>
    </ligand>
</feature>
<accession>Q9K5T1</accession>
<protein>
    <recommendedName>
        <fullName evidence="1">Ribosomal RNA large subunit methyltransferase H</fullName>
        <ecNumber evidence="1">2.1.1.177</ecNumber>
    </recommendedName>
    <alternativeName>
        <fullName evidence="1">23S rRNA (pseudouridine1915-N3)-methyltransferase</fullName>
    </alternativeName>
    <alternativeName>
        <fullName evidence="1">23S rRNA m3Psi1915 methyltransferase</fullName>
    </alternativeName>
    <alternativeName>
        <fullName evidence="1">rRNA (pseudouridine-N3-)-methyltransferase RlmH</fullName>
    </alternativeName>
</protein>